<accession>P66087</accession>
<accession>A1IP06</accession>
<accession>Q9JRJ1</accession>
<proteinExistence type="inferred from homology"/>
<protein>
    <recommendedName>
        <fullName evidence="1">Large ribosomal subunit protein uL1</fullName>
    </recommendedName>
    <alternativeName>
        <fullName evidence="2">50S ribosomal protein L1</fullName>
    </alternativeName>
</protein>
<comment type="function">
    <text evidence="1">Binds directly to 23S rRNA. The L1 stalk is quite mobile in the ribosome, and is involved in E site tRNA release.</text>
</comment>
<comment type="function">
    <text evidence="1">Protein L1 is also a translational repressor protein, it controls the translation of the L11 operon by binding to its mRNA.</text>
</comment>
<comment type="subunit">
    <text evidence="1">Part of the 50S ribosomal subunit.</text>
</comment>
<comment type="similarity">
    <text evidence="1">Belongs to the universal ribosomal protein uL1 family.</text>
</comment>
<gene>
    <name evidence="1" type="primary">rplA</name>
    <name type="ordered locus">NMA0145</name>
</gene>
<organism>
    <name type="scientific">Neisseria meningitidis serogroup A / serotype 4A (strain DSM 15465 / Z2491)</name>
    <dbReference type="NCBI Taxonomy" id="122587"/>
    <lineage>
        <taxon>Bacteria</taxon>
        <taxon>Pseudomonadati</taxon>
        <taxon>Pseudomonadota</taxon>
        <taxon>Betaproteobacteria</taxon>
        <taxon>Neisseriales</taxon>
        <taxon>Neisseriaceae</taxon>
        <taxon>Neisseria</taxon>
    </lineage>
</organism>
<feature type="chain" id="PRO_0000125698" description="Large ribosomal subunit protein uL1">
    <location>
        <begin position="1"/>
        <end position="231"/>
    </location>
</feature>
<dbReference type="EMBL" id="AL157959">
    <property type="protein sequence ID" value="CAM07463.1"/>
    <property type="molecule type" value="Genomic_DNA"/>
</dbReference>
<dbReference type="RefSeq" id="WP_002218415.1">
    <property type="nucleotide sequence ID" value="NC_003116.1"/>
</dbReference>
<dbReference type="SMR" id="P66087"/>
<dbReference type="EnsemblBacteria" id="CAM07463">
    <property type="protein sequence ID" value="CAM07463"/>
    <property type="gene ID" value="NMA0145"/>
</dbReference>
<dbReference type="GeneID" id="93387204"/>
<dbReference type="KEGG" id="nma:NMA0145"/>
<dbReference type="HOGENOM" id="CLU_062853_0_0_4"/>
<dbReference type="Proteomes" id="UP000000626">
    <property type="component" value="Chromosome"/>
</dbReference>
<dbReference type="GO" id="GO:0022625">
    <property type="term" value="C:cytosolic large ribosomal subunit"/>
    <property type="evidence" value="ECO:0007669"/>
    <property type="project" value="TreeGrafter"/>
</dbReference>
<dbReference type="GO" id="GO:0019843">
    <property type="term" value="F:rRNA binding"/>
    <property type="evidence" value="ECO:0007669"/>
    <property type="project" value="UniProtKB-UniRule"/>
</dbReference>
<dbReference type="GO" id="GO:0003735">
    <property type="term" value="F:structural constituent of ribosome"/>
    <property type="evidence" value="ECO:0007669"/>
    <property type="project" value="InterPro"/>
</dbReference>
<dbReference type="GO" id="GO:0000049">
    <property type="term" value="F:tRNA binding"/>
    <property type="evidence" value="ECO:0007669"/>
    <property type="project" value="UniProtKB-KW"/>
</dbReference>
<dbReference type="GO" id="GO:0006417">
    <property type="term" value="P:regulation of translation"/>
    <property type="evidence" value="ECO:0007669"/>
    <property type="project" value="UniProtKB-KW"/>
</dbReference>
<dbReference type="GO" id="GO:0006412">
    <property type="term" value="P:translation"/>
    <property type="evidence" value="ECO:0007669"/>
    <property type="project" value="UniProtKB-UniRule"/>
</dbReference>
<dbReference type="CDD" id="cd00403">
    <property type="entry name" value="Ribosomal_L1"/>
    <property type="match status" value="1"/>
</dbReference>
<dbReference type="FunFam" id="3.40.50.790:FF:000001">
    <property type="entry name" value="50S ribosomal protein L1"/>
    <property type="match status" value="1"/>
</dbReference>
<dbReference type="Gene3D" id="3.30.190.20">
    <property type="match status" value="1"/>
</dbReference>
<dbReference type="Gene3D" id="3.40.50.790">
    <property type="match status" value="1"/>
</dbReference>
<dbReference type="HAMAP" id="MF_01318_B">
    <property type="entry name" value="Ribosomal_uL1_B"/>
    <property type="match status" value="1"/>
</dbReference>
<dbReference type="InterPro" id="IPR005878">
    <property type="entry name" value="Ribosom_uL1_bac-type"/>
</dbReference>
<dbReference type="InterPro" id="IPR002143">
    <property type="entry name" value="Ribosomal_uL1"/>
</dbReference>
<dbReference type="InterPro" id="IPR023674">
    <property type="entry name" value="Ribosomal_uL1-like"/>
</dbReference>
<dbReference type="InterPro" id="IPR028364">
    <property type="entry name" value="Ribosomal_uL1/biogenesis"/>
</dbReference>
<dbReference type="InterPro" id="IPR016095">
    <property type="entry name" value="Ribosomal_uL1_3-a/b-sand"/>
</dbReference>
<dbReference type="InterPro" id="IPR023673">
    <property type="entry name" value="Ribosomal_uL1_CS"/>
</dbReference>
<dbReference type="NCBIfam" id="TIGR01169">
    <property type="entry name" value="rplA_bact"/>
    <property type="match status" value="1"/>
</dbReference>
<dbReference type="PANTHER" id="PTHR36427">
    <property type="entry name" value="54S RIBOSOMAL PROTEIN L1, MITOCHONDRIAL"/>
    <property type="match status" value="1"/>
</dbReference>
<dbReference type="PANTHER" id="PTHR36427:SF3">
    <property type="entry name" value="LARGE RIBOSOMAL SUBUNIT PROTEIN UL1M"/>
    <property type="match status" value="1"/>
</dbReference>
<dbReference type="Pfam" id="PF00687">
    <property type="entry name" value="Ribosomal_L1"/>
    <property type="match status" value="1"/>
</dbReference>
<dbReference type="PIRSF" id="PIRSF002155">
    <property type="entry name" value="Ribosomal_L1"/>
    <property type="match status" value="1"/>
</dbReference>
<dbReference type="SUPFAM" id="SSF56808">
    <property type="entry name" value="Ribosomal protein L1"/>
    <property type="match status" value="1"/>
</dbReference>
<dbReference type="PROSITE" id="PS01199">
    <property type="entry name" value="RIBOSOMAL_L1"/>
    <property type="match status" value="1"/>
</dbReference>
<reference key="1">
    <citation type="journal article" date="2000" name="Nature">
        <title>Complete DNA sequence of a serogroup A strain of Neisseria meningitidis Z2491.</title>
        <authorList>
            <person name="Parkhill J."/>
            <person name="Achtman M."/>
            <person name="James K.D."/>
            <person name="Bentley S.D."/>
            <person name="Churcher C.M."/>
            <person name="Klee S.R."/>
            <person name="Morelli G."/>
            <person name="Basham D."/>
            <person name="Brown D."/>
            <person name="Chillingworth T."/>
            <person name="Davies R.M."/>
            <person name="Davis P."/>
            <person name="Devlin K."/>
            <person name="Feltwell T."/>
            <person name="Hamlin N."/>
            <person name="Holroyd S."/>
            <person name="Jagels K."/>
            <person name="Leather S."/>
            <person name="Moule S."/>
            <person name="Mungall K.L."/>
            <person name="Quail M.A."/>
            <person name="Rajandream M.A."/>
            <person name="Rutherford K.M."/>
            <person name="Simmonds M."/>
            <person name="Skelton J."/>
            <person name="Whitehead S."/>
            <person name="Spratt B.G."/>
            <person name="Barrell B.G."/>
        </authorList>
    </citation>
    <scope>NUCLEOTIDE SEQUENCE [LARGE SCALE GENOMIC DNA]</scope>
    <source>
        <strain>DSM 15465 / Z2491</strain>
    </source>
</reference>
<name>RL1_NEIMA</name>
<keyword id="KW-0678">Repressor</keyword>
<keyword id="KW-0687">Ribonucleoprotein</keyword>
<keyword id="KW-0689">Ribosomal protein</keyword>
<keyword id="KW-0694">RNA-binding</keyword>
<keyword id="KW-0699">rRNA-binding</keyword>
<keyword id="KW-0810">Translation regulation</keyword>
<keyword id="KW-0820">tRNA-binding</keyword>
<sequence length="231" mass="24102">MAKVSKRLKALRSSVEANKLYAIDEAIALVKKAATAKFDESVDVSFNLGVDPRKSDQVIRGSVVLPKGTGKITRVAVFTQGANAEAAKEAGADIVGFEDLAAEIKAGNLNFDVVIASPDAMRIVGQLGTILGPRGLMPNPKVGTVTPNVAEAVKNAKAGQVQYRTDKAGIVHATIGRASFAEADLKENFDALLDAIVKAKPAAAKGQYLKKVAVSSTMGLGIRVDTSSVNN</sequence>
<evidence type="ECO:0000255" key="1">
    <source>
        <dbReference type="HAMAP-Rule" id="MF_01318"/>
    </source>
</evidence>
<evidence type="ECO:0000305" key="2"/>